<evidence type="ECO:0000255" key="1">
    <source>
        <dbReference type="HAMAP-Rule" id="MF_00323"/>
    </source>
</evidence>
<evidence type="ECO:0000305" key="2"/>
<accession>Q9KTB6</accession>
<feature type="chain" id="PRO_0000175222" description="Ferrochelatase">
    <location>
        <begin position="1"/>
        <end position="320"/>
    </location>
</feature>
<feature type="binding site" evidence="1">
    <location>
        <position position="194"/>
    </location>
    <ligand>
        <name>Fe cation</name>
        <dbReference type="ChEBI" id="CHEBI:24875"/>
    </ligand>
</feature>
<feature type="binding site" evidence="1">
    <location>
        <position position="275"/>
    </location>
    <ligand>
        <name>Fe cation</name>
        <dbReference type="ChEBI" id="CHEBI:24875"/>
    </ligand>
</feature>
<comment type="function">
    <text evidence="1">Catalyzes the ferrous insertion into protoporphyrin IX.</text>
</comment>
<comment type="catalytic activity">
    <reaction evidence="1">
        <text>heme b + 2 H(+) = protoporphyrin IX + Fe(2+)</text>
        <dbReference type="Rhea" id="RHEA:22584"/>
        <dbReference type="ChEBI" id="CHEBI:15378"/>
        <dbReference type="ChEBI" id="CHEBI:29033"/>
        <dbReference type="ChEBI" id="CHEBI:57306"/>
        <dbReference type="ChEBI" id="CHEBI:60344"/>
        <dbReference type="EC" id="4.98.1.1"/>
    </reaction>
</comment>
<comment type="pathway">
    <text evidence="1">Porphyrin-containing compound metabolism; protoheme biosynthesis; protoheme from protoporphyrin-IX: step 1/1.</text>
</comment>
<comment type="subcellular location">
    <subcellularLocation>
        <location evidence="1">Cytoplasm</location>
    </subcellularLocation>
</comment>
<comment type="similarity">
    <text evidence="1 2">Belongs to the ferrochelatase family.</text>
</comment>
<comment type="sequence caution" evidence="2">
    <conflict type="erroneous initiation">
        <sequence resource="EMBL-CDS" id="AAF94148"/>
    </conflict>
</comment>
<gene>
    <name evidence="1" type="primary">hemH</name>
    <name type="ordered locus">VC_0987</name>
</gene>
<proteinExistence type="inferred from homology"/>
<organism>
    <name type="scientific">Vibrio cholerae serotype O1 (strain ATCC 39315 / El Tor Inaba N16961)</name>
    <dbReference type="NCBI Taxonomy" id="243277"/>
    <lineage>
        <taxon>Bacteria</taxon>
        <taxon>Pseudomonadati</taxon>
        <taxon>Pseudomonadota</taxon>
        <taxon>Gammaproteobacteria</taxon>
        <taxon>Vibrionales</taxon>
        <taxon>Vibrionaceae</taxon>
        <taxon>Vibrio</taxon>
    </lineage>
</organism>
<name>HEMH_VIBCH</name>
<sequence>MNNHKKLGILLANLGTPQAPTSQAVKAFLSQFLHDQRVVDMSRWLWCPLLHGIILPTRSPKVAKLYQSIWMDEGSPLMVYSRRQRDKLAELSQRPVELGMTYGEPSLLEGVRKLQQQGVEQIVVLPLYPQYSATTTAAVFDGLAKALRQLPVVPELHFIRDYHDHPLYIQALAKSVRASWQQHGQGDLLLCSYHGIPKRYAQNGDIYPEHCLKTTELLAQALGLPQDKVMMTYQSQFGKEEWLQPYTDKTMEALPRQGIKKLDVICPAFSVDCLETLEEIAEQNQEIFLHSGGEAFHYVPCLNDSQSHIELMAALVKVDC</sequence>
<protein>
    <recommendedName>
        <fullName evidence="1">Ferrochelatase</fullName>
        <ecNumber evidence="1">4.98.1.1</ecNumber>
    </recommendedName>
    <alternativeName>
        <fullName evidence="1">Heme synthase</fullName>
    </alternativeName>
    <alternativeName>
        <fullName evidence="1">Protoheme ferro-lyase</fullName>
    </alternativeName>
</protein>
<keyword id="KW-0963">Cytoplasm</keyword>
<keyword id="KW-0350">Heme biosynthesis</keyword>
<keyword id="KW-0408">Iron</keyword>
<keyword id="KW-0456">Lyase</keyword>
<keyword id="KW-0479">Metal-binding</keyword>
<keyword id="KW-0627">Porphyrin biosynthesis</keyword>
<keyword id="KW-1185">Reference proteome</keyword>
<reference key="1">
    <citation type="journal article" date="2000" name="Nature">
        <title>DNA sequence of both chromosomes of the cholera pathogen Vibrio cholerae.</title>
        <authorList>
            <person name="Heidelberg J.F."/>
            <person name="Eisen J.A."/>
            <person name="Nelson W.C."/>
            <person name="Clayton R.A."/>
            <person name="Gwinn M.L."/>
            <person name="Dodson R.J."/>
            <person name="Haft D.H."/>
            <person name="Hickey E.K."/>
            <person name="Peterson J.D."/>
            <person name="Umayam L.A."/>
            <person name="Gill S.R."/>
            <person name="Nelson K.E."/>
            <person name="Read T.D."/>
            <person name="Tettelin H."/>
            <person name="Richardson D.L."/>
            <person name="Ermolaeva M.D."/>
            <person name="Vamathevan J.J."/>
            <person name="Bass S."/>
            <person name="Qin H."/>
            <person name="Dragoi I."/>
            <person name="Sellers P."/>
            <person name="McDonald L.A."/>
            <person name="Utterback T.R."/>
            <person name="Fleischmann R.D."/>
            <person name="Nierman W.C."/>
            <person name="White O."/>
            <person name="Salzberg S.L."/>
            <person name="Smith H.O."/>
            <person name="Colwell R.R."/>
            <person name="Mekalanos J.J."/>
            <person name="Venter J.C."/>
            <person name="Fraser C.M."/>
        </authorList>
    </citation>
    <scope>NUCLEOTIDE SEQUENCE [LARGE SCALE GENOMIC DNA]</scope>
    <source>
        <strain>ATCC 39315 / El Tor Inaba N16961</strain>
    </source>
</reference>
<dbReference type="EC" id="4.98.1.1" evidence="1"/>
<dbReference type="EMBL" id="AE003852">
    <property type="protein sequence ID" value="AAF94148.1"/>
    <property type="status" value="ALT_INIT"/>
    <property type="molecule type" value="Genomic_DNA"/>
</dbReference>
<dbReference type="PIR" id="D82255">
    <property type="entry name" value="D82255"/>
</dbReference>
<dbReference type="RefSeq" id="NP_230633.1">
    <property type="nucleotide sequence ID" value="NC_002505.1"/>
</dbReference>
<dbReference type="RefSeq" id="WP_001059263.1">
    <property type="nucleotide sequence ID" value="NZ_LT906614.1"/>
</dbReference>
<dbReference type="SMR" id="Q9KTB6"/>
<dbReference type="STRING" id="243277.VC_0987"/>
<dbReference type="DNASU" id="2614240"/>
<dbReference type="EnsemblBacteria" id="AAF94148">
    <property type="protein sequence ID" value="AAF94148"/>
    <property type="gene ID" value="VC_0987"/>
</dbReference>
<dbReference type="KEGG" id="vch:VC_0987"/>
<dbReference type="PATRIC" id="fig|243277.26.peg.940"/>
<dbReference type="eggNOG" id="COG0276">
    <property type="taxonomic scope" value="Bacteria"/>
</dbReference>
<dbReference type="HOGENOM" id="CLU_018884_0_0_6"/>
<dbReference type="UniPathway" id="UPA00252">
    <property type="reaction ID" value="UER00325"/>
</dbReference>
<dbReference type="Proteomes" id="UP000000584">
    <property type="component" value="Chromosome 1"/>
</dbReference>
<dbReference type="GO" id="GO:0005737">
    <property type="term" value="C:cytoplasm"/>
    <property type="evidence" value="ECO:0007669"/>
    <property type="project" value="UniProtKB-SubCell"/>
</dbReference>
<dbReference type="GO" id="GO:0004325">
    <property type="term" value="F:ferrochelatase activity"/>
    <property type="evidence" value="ECO:0000318"/>
    <property type="project" value="GO_Central"/>
</dbReference>
<dbReference type="GO" id="GO:0046872">
    <property type="term" value="F:metal ion binding"/>
    <property type="evidence" value="ECO:0007669"/>
    <property type="project" value="UniProtKB-KW"/>
</dbReference>
<dbReference type="GO" id="GO:0006783">
    <property type="term" value="P:heme biosynthetic process"/>
    <property type="evidence" value="ECO:0000318"/>
    <property type="project" value="GO_Central"/>
</dbReference>
<dbReference type="CDD" id="cd00419">
    <property type="entry name" value="Ferrochelatase_C"/>
    <property type="match status" value="1"/>
</dbReference>
<dbReference type="CDD" id="cd03411">
    <property type="entry name" value="Ferrochelatase_N"/>
    <property type="match status" value="1"/>
</dbReference>
<dbReference type="FunFam" id="3.40.50.1400:FF:000004">
    <property type="entry name" value="Ferrochelatase"/>
    <property type="match status" value="1"/>
</dbReference>
<dbReference type="Gene3D" id="3.40.50.1400">
    <property type="match status" value="2"/>
</dbReference>
<dbReference type="HAMAP" id="MF_00323">
    <property type="entry name" value="Ferrochelatase"/>
    <property type="match status" value="1"/>
</dbReference>
<dbReference type="InterPro" id="IPR001015">
    <property type="entry name" value="Ferrochelatase"/>
</dbReference>
<dbReference type="InterPro" id="IPR019772">
    <property type="entry name" value="Ferrochelatase_AS"/>
</dbReference>
<dbReference type="InterPro" id="IPR033644">
    <property type="entry name" value="Ferrochelatase_C"/>
</dbReference>
<dbReference type="InterPro" id="IPR033659">
    <property type="entry name" value="Ferrochelatase_N"/>
</dbReference>
<dbReference type="NCBIfam" id="TIGR00109">
    <property type="entry name" value="hemH"/>
    <property type="match status" value="1"/>
</dbReference>
<dbReference type="PANTHER" id="PTHR11108">
    <property type="entry name" value="FERROCHELATASE"/>
    <property type="match status" value="1"/>
</dbReference>
<dbReference type="PANTHER" id="PTHR11108:SF1">
    <property type="entry name" value="FERROCHELATASE, MITOCHONDRIAL"/>
    <property type="match status" value="1"/>
</dbReference>
<dbReference type="Pfam" id="PF00762">
    <property type="entry name" value="Ferrochelatase"/>
    <property type="match status" value="1"/>
</dbReference>
<dbReference type="SUPFAM" id="SSF53800">
    <property type="entry name" value="Chelatase"/>
    <property type="match status" value="1"/>
</dbReference>
<dbReference type="PROSITE" id="PS00534">
    <property type="entry name" value="FERROCHELATASE"/>
    <property type="match status" value="1"/>
</dbReference>